<sequence>MKVALVYNEKVETLAVVKALEKLLDSRKIEIDPENPDVVITIGGDGTLISGFHKYQNLVDQIRFIGVHTGHLGFYTDWRNFEIGKMVDNLTKKQPSSASYPLLELIITTGSGEKKKLLALNEATIKRVSKTLKADVYIRDQFFESFKGDGLCVSTPTGSTAYSKSLGGAVIHPRLKALQMTEIASINNRVFRTLSSPIVIAPDEWITIKPESDDHYVVTYDGYEFNHKHIKKIEYRISQHVIRFDKYQHTHFWNRVEDAFIGQPKNK</sequence>
<evidence type="ECO:0000255" key="1">
    <source>
        <dbReference type="HAMAP-Rule" id="MF_00361"/>
    </source>
</evidence>
<comment type="function">
    <text evidence="1">Involved in the regulation of the intracellular balance of NAD and NADP, and is a key enzyme in the biosynthesis of NADP. Catalyzes specifically the phosphorylation on 2'-hydroxyl of the adenosine moiety of NAD to yield NADP.</text>
</comment>
<comment type="catalytic activity">
    <reaction evidence="1">
        <text>NAD(+) + ATP = ADP + NADP(+) + H(+)</text>
        <dbReference type="Rhea" id="RHEA:18629"/>
        <dbReference type="ChEBI" id="CHEBI:15378"/>
        <dbReference type="ChEBI" id="CHEBI:30616"/>
        <dbReference type="ChEBI" id="CHEBI:57540"/>
        <dbReference type="ChEBI" id="CHEBI:58349"/>
        <dbReference type="ChEBI" id="CHEBI:456216"/>
        <dbReference type="EC" id="2.7.1.23"/>
    </reaction>
</comment>
<comment type="cofactor">
    <cofactor evidence="1">
        <name>a divalent metal cation</name>
        <dbReference type="ChEBI" id="CHEBI:60240"/>
    </cofactor>
</comment>
<comment type="subcellular location">
    <subcellularLocation>
        <location evidence="1">Cytoplasm</location>
    </subcellularLocation>
</comment>
<comment type="similarity">
    <text evidence="1">Belongs to the NAD kinase family.</text>
</comment>
<gene>
    <name evidence="1" type="primary">nadK</name>
    <name type="ordered locus">LGAS_1353</name>
</gene>
<feature type="chain" id="PRO_1000005417" description="NAD kinase">
    <location>
        <begin position="1"/>
        <end position="267"/>
    </location>
</feature>
<feature type="active site" description="Proton acceptor" evidence="1">
    <location>
        <position position="45"/>
    </location>
</feature>
<feature type="binding site" evidence="1">
    <location>
        <begin position="45"/>
        <end position="46"/>
    </location>
    <ligand>
        <name>NAD(+)</name>
        <dbReference type="ChEBI" id="CHEBI:57540"/>
    </ligand>
</feature>
<feature type="binding site" evidence="1">
    <location>
        <begin position="121"/>
        <end position="122"/>
    </location>
    <ligand>
        <name>NAD(+)</name>
        <dbReference type="ChEBI" id="CHEBI:57540"/>
    </ligand>
</feature>
<feature type="binding site" evidence="1">
    <location>
        <position position="147"/>
    </location>
    <ligand>
        <name>NAD(+)</name>
        <dbReference type="ChEBI" id="CHEBI:57540"/>
    </ligand>
</feature>
<feature type="binding site" evidence="1">
    <location>
        <position position="149"/>
    </location>
    <ligand>
        <name>NAD(+)</name>
        <dbReference type="ChEBI" id="CHEBI:57540"/>
    </ligand>
</feature>
<feature type="binding site" evidence="1">
    <location>
        <begin position="160"/>
        <end position="165"/>
    </location>
    <ligand>
        <name>NAD(+)</name>
        <dbReference type="ChEBI" id="CHEBI:57540"/>
    </ligand>
</feature>
<feature type="binding site" evidence="1">
    <location>
        <position position="184"/>
    </location>
    <ligand>
        <name>NAD(+)</name>
        <dbReference type="ChEBI" id="CHEBI:57540"/>
    </ligand>
</feature>
<accession>Q042A7</accession>
<keyword id="KW-0067">ATP-binding</keyword>
<keyword id="KW-0963">Cytoplasm</keyword>
<keyword id="KW-0418">Kinase</keyword>
<keyword id="KW-0520">NAD</keyword>
<keyword id="KW-0521">NADP</keyword>
<keyword id="KW-0547">Nucleotide-binding</keyword>
<keyword id="KW-0808">Transferase</keyword>
<dbReference type="EC" id="2.7.1.23" evidence="1"/>
<dbReference type="EMBL" id="CP000413">
    <property type="protein sequence ID" value="ABJ60715.1"/>
    <property type="molecule type" value="Genomic_DNA"/>
</dbReference>
<dbReference type="RefSeq" id="WP_003646970.1">
    <property type="nucleotide sequence ID" value="NZ_WBMG01000003.1"/>
</dbReference>
<dbReference type="SMR" id="Q042A7"/>
<dbReference type="KEGG" id="lga:LGAS_1353"/>
<dbReference type="HOGENOM" id="CLU_008831_0_3_9"/>
<dbReference type="BioCyc" id="LGAS324831:G1G6Y-1347-MONOMER"/>
<dbReference type="Proteomes" id="UP000000664">
    <property type="component" value="Chromosome"/>
</dbReference>
<dbReference type="GO" id="GO:0005737">
    <property type="term" value="C:cytoplasm"/>
    <property type="evidence" value="ECO:0007669"/>
    <property type="project" value="UniProtKB-SubCell"/>
</dbReference>
<dbReference type="GO" id="GO:0005524">
    <property type="term" value="F:ATP binding"/>
    <property type="evidence" value="ECO:0007669"/>
    <property type="project" value="UniProtKB-KW"/>
</dbReference>
<dbReference type="GO" id="GO:0046872">
    <property type="term" value="F:metal ion binding"/>
    <property type="evidence" value="ECO:0007669"/>
    <property type="project" value="UniProtKB-UniRule"/>
</dbReference>
<dbReference type="GO" id="GO:0051287">
    <property type="term" value="F:NAD binding"/>
    <property type="evidence" value="ECO:0007669"/>
    <property type="project" value="UniProtKB-ARBA"/>
</dbReference>
<dbReference type="GO" id="GO:0003951">
    <property type="term" value="F:NAD+ kinase activity"/>
    <property type="evidence" value="ECO:0007669"/>
    <property type="project" value="UniProtKB-UniRule"/>
</dbReference>
<dbReference type="GO" id="GO:0019674">
    <property type="term" value="P:NAD metabolic process"/>
    <property type="evidence" value="ECO:0007669"/>
    <property type="project" value="InterPro"/>
</dbReference>
<dbReference type="GO" id="GO:0006741">
    <property type="term" value="P:NADP biosynthetic process"/>
    <property type="evidence" value="ECO:0007669"/>
    <property type="project" value="UniProtKB-UniRule"/>
</dbReference>
<dbReference type="Gene3D" id="3.40.50.10330">
    <property type="entry name" value="Probable inorganic polyphosphate/atp-NAD kinase, domain 1"/>
    <property type="match status" value="1"/>
</dbReference>
<dbReference type="Gene3D" id="2.60.200.30">
    <property type="entry name" value="Probable inorganic polyphosphate/atp-NAD kinase, domain 2"/>
    <property type="match status" value="1"/>
</dbReference>
<dbReference type="HAMAP" id="MF_00361">
    <property type="entry name" value="NAD_kinase"/>
    <property type="match status" value="1"/>
</dbReference>
<dbReference type="InterPro" id="IPR017438">
    <property type="entry name" value="ATP-NAD_kinase_N"/>
</dbReference>
<dbReference type="InterPro" id="IPR017437">
    <property type="entry name" value="ATP-NAD_kinase_PpnK-typ_C"/>
</dbReference>
<dbReference type="InterPro" id="IPR016064">
    <property type="entry name" value="NAD/diacylglycerol_kinase_sf"/>
</dbReference>
<dbReference type="InterPro" id="IPR002504">
    <property type="entry name" value="NADK"/>
</dbReference>
<dbReference type="NCBIfam" id="NF003424">
    <property type="entry name" value="PRK04885.1"/>
    <property type="match status" value="1"/>
</dbReference>
<dbReference type="PANTHER" id="PTHR20275">
    <property type="entry name" value="NAD KINASE"/>
    <property type="match status" value="1"/>
</dbReference>
<dbReference type="PANTHER" id="PTHR20275:SF0">
    <property type="entry name" value="NAD KINASE"/>
    <property type="match status" value="1"/>
</dbReference>
<dbReference type="Pfam" id="PF01513">
    <property type="entry name" value="NAD_kinase"/>
    <property type="match status" value="1"/>
</dbReference>
<dbReference type="Pfam" id="PF20143">
    <property type="entry name" value="NAD_kinase_C"/>
    <property type="match status" value="1"/>
</dbReference>
<dbReference type="SUPFAM" id="SSF111331">
    <property type="entry name" value="NAD kinase/diacylglycerol kinase-like"/>
    <property type="match status" value="1"/>
</dbReference>
<organism>
    <name type="scientific">Lactobacillus gasseri (strain ATCC 33323 / DSM 20243 / BCRC 14619 / CIP 102991 / JCM 1131 / KCTC 3163 / NCIMB 11718 / NCTC 13722 / AM63)</name>
    <dbReference type="NCBI Taxonomy" id="324831"/>
    <lineage>
        <taxon>Bacteria</taxon>
        <taxon>Bacillati</taxon>
        <taxon>Bacillota</taxon>
        <taxon>Bacilli</taxon>
        <taxon>Lactobacillales</taxon>
        <taxon>Lactobacillaceae</taxon>
        <taxon>Lactobacillus</taxon>
    </lineage>
</organism>
<proteinExistence type="inferred from homology"/>
<reference key="1">
    <citation type="journal article" date="2006" name="Proc. Natl. Acad. Sci. U.S.A.">
        <title>Comparative genomics of the lactic acid bacteria.</title>
        <authorList>
            <person name="Makarova K.S."/>
            <person name="Slesarev A."/>
            <person name="Wolf Y.I."/>
            <person name="Sorokin A."/>
            <person name="Mirkin B."/>
            <person name="Koonin E.V."/>
            <person name="Pavlov A."/>
            <person name="Pavlova N."/>
            <person name="Karamychev V."/>
            <person name="Polouchine N."/>
            <person name="Shakhova V."/>
            <person name="Grigoriev I."/>
            <person name="Lou Y."/>
            <person name="Rohksar D."/>
            <person name="Lucas S."/>
            <person name="Huang K."/>
            <person name="Goodstein D.M."/>
            <person name="Hawkins T."/>
            <person name="Plengvidhya V."/>
            <person name="Welker D."/>
            <person name="Hughes J."/>
            <person name="Goh Y."/>
            <person name="Benson A."/>
            <person name="Baldwin K."/>
            <person name="Lee J.-H."/>
            <person name="Diaz-Muniz I."/>
            <person name="Dosti B."/>
            <person name="Smeianov V."/>
            <person name="Wechter W."/>
            <person name="Barabote R."/>
            <person name="Lorca G."/>
            <person name="Altermann E."/>
            <person name="Barrangou R."/>
            <person name="Ganesan B."/>
            <person name="Xie Y."/>
            <person name="Rawsthorne H."/>
            <person name="Tamir D."/>
            <person name="Parker C."/>
            <person name="Breidt F."/>
            <person name="Broadbent J.R."/>
            <person name="Hutkins R."/>
            <person name="O'Sullivan D."/>
            <person name="Steele J."/>
            <person name="Unlu G."/>
            <person name="Saier M.H. Jr."/>
            <person name="Klaenhammer T."/>
            <person name="Richardson P."/>
            <person name="Kozyavkin S."/>
            <person name="Weimer B.C."/>
            <person name="Mills D.A."/>
        </authorList>
    </citation>
    <scope>NUCLEOTIDE SEQUENCE [LARGE SCALE GENOMIC DNA]</scope>
    <source>
        <strain>ATCC 33323 / DSM 20243 / BCRC 14619 / CIP 102991 / JCM 1131 / KCTC 3163 / NCIMB 11718 / NCTC 13722 / AM63</strain>
    </source>
</reference>
<protein>
    <recommendedName>
        <fullName evidence="1">NAD kinase</fullName>
        <ecNumber evidence="1">2.7.1.23</ecNumber>
    </recommendedName>
    <alternativeName>
        <fullName evidence="1">ATP-dependent NAD kinase</fullName>
    </alternativeName>
</protein>
<name>NADK_LACGA</name>